<gene>
    <name evidence="1 6" type="primary">nanT</name>
    <name type="ordered locus">b3224</name>
    <name type="ordered locus">JW3193</name>
</gene>
<comment type="function">
    <text evidence="3 4">Catalyzes the proton-dependent transport of sialic acid (PubMed:22167185, PubMed:23848303). Can transport the common sialic acid N-acetylneuraminic acid (Neu5Ac) and the related sialic acids N-glycolylneuraminic acid (Neu5Gc) and 3-keto-3-deoxy-D-glycero-D-galactonononic acid (KDN) (PubMed:23848303). Functions as a bidirectional transporter in vitro (PubMed:22167185).</text>
</comment>
<comment type="catalytic activity">
    <reaction evidence="1 3 4">
        <text>N-acetylneuraminate(in) + H(+)(in) = N-acetylneuraminate(out) + H(+)(out)</text>
        <dbReference type="Rhea" id="RHEA:28987"/>
        <dbReference type="ChEBI" id="CHEBI:15378"/>
        <dbReference type="ChEBI" id="CHEBI:35418"/>
    </reaction>
</comment>
<comment type="subcellular location">
    <subcellularLocation>
        <location evidence="1 2">Cell inner membrane</location>
        <topology evidence="1">Multi-pass membrane protein</topology>
    </subcellularLocation>
</comment>
<comment type="induction">
    <text evidence="5">Negatively regulated by the transcriptional repressor NanR. Induced by N-acetylneuraminate, via inactivation of NanR.</text>
</comment>
<comment type="disruption phenotype">
    <text evidence="4">Deletion mutant is unable to grow in the presence of Neu5Ac, Neu5Gc or KDN.</text>
</comment>
<comment type="similarity">
    <text evidence="1 7">Belongs to the major facilitator superfamily. Sialate:H(+) symporter (SHS) (TC 2.A.1.12) family.</text>
</comment>
<comment type="sequence caution" evidence="7">
    <conflict type="erroneous initiation">
        <sequence resource="EMBL-CDS" id="AAA58026"/>
    </conflict>
    <text>Extended N-terminus.</text>
</comment>
<comment type="sequence caution" evidence="7">
    <conflict type="erroneous initiation">
        <sequence resource="EMBL-CDS" id="AAA86827"/>
    </conflict>
    <text>Extended N-terminus.</text>
</comment>
<organism>
    <name type="scientific">Escherichia coli (strain K12)</name>
    <dbReference type="NCBI Taxonomy" id="83333"/>
    <lineage>
        <taxon>Bacteria</taxon>
        <taxon>Pseudomonadati</taxon>
        <taxon>Pseudomonadota</taxon>
        <taxon>Gammaproteobacteria</taxon>
        <taxon>Enterobacterales</taxon>
        <taxon>Enterobacteriaceae</taxon>
        <taxon>Escherichia</taxon>
    </lineage>
</organism>
<sequence>MSTTTQNIPWYRHLNRAQWRAFSAAWLGYLLDGFDFVLIALVLTEVQGEFGLTTVQAASLISAAFISRWFGGLMLGAMGDRYGRRLAMVTSIVLFSAGTLACGFAPGYITMFIARLVIGMGMAGEYGSSATYVIESWPKHLRNKASGFLISGFSVGAVVAAQVYSLVVPVWGWRALFFIGILPIIFALWLRKNIPEAEDWKEKHAGKAPVRTMVDILYRGEHRIANIVMTLAAATALWFCFAGNLQNAAIVAVLGLLCAAIFISFMVQSAGKRWPTGVMLMVVVLFAFLYSWPIQALLPTYLKTDLAYNPHTVANVLFFSGFGAAVGCCVGGFLGDWLGTRKAYVCSLLASQLLIIPVFAIGGANVWVLGLLLFFQQMLGQGIAGILPKLIGGYFDTDQRAAGLGFTYNVGALGGALAPIIGALIAQRLDLGTALASLSFSLTFVVILLIGLDMPSRVQRWLRPEALRTHDAIDGKPFSGAVPFGSAKNDLVKTKS</sequence>
<evidence type="ECO:0000255" key="1">
    <source>
        <dbReference type="HAMAP-Rule" id="MF_01238"/>
    </source>
</evidence>
<evidence type="ECO:0000269" key="2">
    <source>
    </source>
</evidence>
<evidence type="ECO:0000269" key="3">
    <source>
    </source>
</evidence>
<evidence type="ECO:0000269" key="4">
    <source>
    </source>
</evidence>
<evidence type="ECO:0000269" key="5">
    <source>
    </source>
</evidence>
<evidence type="ECO:0000303" key="6">
    <source>
    </source>
</evidence>
<evidence type="ECO:0000305" key="7"/>
<evidence type="ECO:0000305" key="8">
    <source>
    </source>
</evidence>
<name>NANT_ECOLI</name>
<keyword id="KW-0997">Cell inner membrane</keyword>
<keyword id="KW-1003">Cell membrane</keyword>
<keyword id="KW-0472">Membrane</keyword>
<keyword id="KW-1185">Reference proteome</keyword>
<keyword id="KW-0762">Sugar transport</keyword>
<keyword id="KW-0812">Transmembrane</keyword>
<keyword id="KW-1133">Transmembrane helix</keyword>
<keyword id="KW-0813">Transport</keyword>
<proteinExistence type="evidence at protein level"/>
<feature type="chain" id="PRO_0000050311" description="Sialic acid transporter NanT">
    <location>
        <begin position="1"/>
        <end position="496"/>
    </location>
</feature>
<feature type="topological domain" description="Cytoplasmic" evidence="8">
    <location>
        <begin position="1"/>
        <end position="21"/>
    </location>
</feature>
<feature type="transmembrane region" description="Helical" evidence="1">
    <location>
        <begin position="22"/>
        <end position="42"/>
    </location>
</feature>
<feature type="topological domain" description="Periplasmic" evidence="8">
    <location>
        <begin position="43"/>
        <end position="57"/>
    </location>
</feature>
<feature type="transmembrane region" description="Helical" evidence="1">
    <location>
        <begin position="58"/>
        <end position="78"/>
    </location>
</feature>
<feature type="topological domain" description="Cytoplasmic" evidence="8">
    <location>
        <begin position="79"/>
        <end position="91"/>
    </location>
</feature>
<feature type="transmembrane region" description="Helical" evidence="1">
    <location>
        <begin position="92"/>
        <end position="112"/>
    </location>
</feature>
<feature type="topological domain" description="Periplasmic" evidence="8">
    <location>
        <begin position="113"/>
        <end position="147"/>
    </location>
</feature>
<feature type="transmembrane region" description="Helical" evidence="1">
    <location>
        <begin position="148"/>
        <end position="168"/>
    </location>
</feature>
<feature type="topological domain" description="Cytoplasmic" evidence="8">
    <location>
        <position position="169"/>
    </location>
</feature>
<feature type="transmembrane region" description="Helical" evidence="1">
    <location>
        <begin position="170"/>
        <end position="190"/>
    </location>
</feature>
<feature type="topological domain" description="Periplasmic" evidence="8">
    <location>
        <begin position="191"/>
        <end position="223"/>
    </location>
</feature>
<feature type="transmembrane region" description="Helical" evidence="1">
    <location>
        <begin position="224"/>
        <end position="244"/>
    </location>
</feature>
<feature type="topological domain" description="Cytoplasmic" evidence="8">
    <location>
        <begin position="245"/>
        <end position="246"/>
    </location>
</feature>
<feature type="transmembrane region" description="Helical" evidence="1">
    <location>
        <begin position="247"/>
        <end position="267"/>
    </location>
</feature>
<feature type="topological domain" description="Periplasmic" evidence="8">
    <location>
        <begin position="268"/>
        <end position="277"/>
    </location>
</feature>
<feature type="transmembrane region" description="Helical" evidence="1">
    <location>
        <begin position="278"/>
        <end position="298"/>
    </location>
</feature>
<feature type="topological domain" description="Cytoplasmic" evidence="8">
    <location>
        <begin position="299"/>
        <end position="312"/>
    </location>
</feature>
<feature type="transmembrane region" description="Helical" evidence="1">
    <location>
        <begin position="313"/>
        <end position="333"/>
    </location>
</feature>
<feature type="topological domain" description="Periplasmic" evidence="8">
    <location>
        <begin position="334"/>
        <end position="354"/>
    </location>
</feature>
<feature type="transmembrane region" description="Helical" evidence="1">
    <location>
        <begin position="355"/>
        <end position="375"/>
    </location>
</feature>
<feature type="topological domain" description="Cytoplasmic" evidence="8">
    <location>
        <begin position="376"/>
        <end position="405"/>
    </location>
</feature>
<feature type="transmembrane region" description="Helical" evidence="1">
    <location>
        <begin position="406"/>
        <end position="426"/>
    </location>
</feature>
<feature type="topological domain" description="Periplasmic" evidence="8">
    <location>
        <begin position="427"/>
        <end position="430"/>
    </location>
</feature>
<feature type="transmembrane region" description="Helical" evidence="1">
    <location>
        <begin position="431"/>
        <end position="451"/>
    </location>
</feature>
<feature type="topological domain" description="Cytoplasmic" evidence="2">
    <location>
        <begin position="452"/>
        <end position="496"/>
    </location>
</feature>
<feature type="sequence conflict" description="In Ref. 1; AAA86827." evidence="7" ref="1">
    <original>E</original>
    <variation>A</variation>
    <location>
        <position position="221"/>
    </location>
</feature>
<feature type="sequence conflict" description="In Ref. 1; AAA86827." evidence="7" ref="1">
    <original>S</original>
    <variation>R</variation>
    <location>
        <position position="441"/>
    </location>
</feature>
<protein>
    <recommendedName>
        <fullName evidence="1 7">Sialic acid transporter NanT</fullName>
    </recommendedName>
    <alternativeName>
        <fullName evidence="1 7">Sialic acid permease</fullName>
    </alternativeName>
    <alternativeName>
        <fullName evidence="1 7">Sialic acid/H(+) symporter</fullName>
    </alternativeName>
</protein>
<accession>P41036</accession>
<accession>P76675</accession>
<accession>Q2M8Y9</accession>
<dbReference type="EMBL" id="U19539">
    <property type="protein sequence ID" value="AAA86827.1"/>
    <property type="status" value="ALT_INIT"/>
    <property type="molecule type" value="Genomic_DNA"/>
</dbReference>
<dbReference type="EMBL" id="U18997">
    <property type="protein sequence ID" value="AAA58026.1"/>
    <property type="status" value="ALT_INIT"/>
    <property type="molecule type" value="Genomic_DNA"/>
</dbReference>
<dbReference type="EMBL" id="U00096">
    <property type="protein sequence ID" value="AAC76256.2"/>
    <property type="molecule type" value="Genomic_DNA"/>
</dbReference>
<dbReference type="EMBL" id="AP009048">
    <property type="protein sequence ID" value="BAE77267.1"/>
    <property type="molecule type" value="Genomic_DNA"/>
</dbReference>
<dbReference type="EMBL" id="D00067">
    <property type="status" value="NOT_ANNOTATED_CDS"/>
    <property type="molecule type" value="Genomic_DNA"/>
</dbReference>
<dbReference type="PIR" id="B65114">
    <property type="entry name" value="B65114"/>
</dbReference>
<dbReference type="RefSeq" id="NP_417691.4">
    <property type="nucleotide sequence ID" value="NC_000913.3"/>
</dbReference>
<dbReference type="RefSeq" id="WP_000108454.1">
    <property type="nucleotide sequence ID" value="NZ_LN832404.1"/>
</dbReference>
<dbReference type="SMR" id="P41036"/>
<dbReference type="BioGRID" id="4262439">
    <property type="interactions" value="9"/>
</dbReference>
<dbReference type="FunCoup" id="P41036">
    <property type="interactions" value="329"/>
</dbReference>
<dbReference type="STRING" id="511145.b3224"/>
<dbReference type="TCDB" id="2.A.1.12.1">
    <property type="family name" value="the major facilitator superfamily (mfs)"/>
</dbReference>
<dbReference type="jPOST" id="P41036"/>
<dbReference type="PaxDb" id="511145-b3224"/>
<dbReference type="EnsemblBacteria" id="AAC76256">
    <property type="protein sequence ID" value="AAC76256"/>
    <property type="gene ID" value="b3224"/>
</dbReference>
<dbReference type="GeneID" id="947740"/>
<dbReference type="KEGG" id="ecj:JW3193"/>
<dbReference type="KEGG" id="eco:b3224"/>
<dbReference type="KEGG" id="ecoc:C3026_17540"/>
<dbReference type="PATRIC" id="fig|1411691.4.peg.3504"/>
<dbReference type="EchoBASE" id="EB4145"/>
<dbReference type="eggNOG" id="COG2814">
    <property type="taxonomic scope" value="Bacteria"/>
</dbReference>
<dbReference type="HOGENOM" id="CLU_001265_46_8_6"/>
<dbReference type="InParanoid" id="P41036"/>
<dbReference type="OMA" id="SDITWGI"/>
<dbReference type="OrthoDB" id="4474610at2"/>
<dbReference type="PhylomeDB" id="P41036"/>
<dbReference type="BioCyc" id="EcoCyc:NANT-MONOMER"/>
<dbReference type="BioCyc" id="MetaCyc:NANT-MONOMER"/>
<dbReference type="PRO" id="PR:P41036"/>
<dbReference type="Proteomes" id="UP000000625">
    <property type="component" value="Chromosome"/>
</dbReference>
<dbReference type="GO" id="GO:0005886">
    <property type="term" value="C:plasma membrane"/>
    <property type="evidence" value="ECO:0000314"/>
    <property type="project" value="EcoCyc"/>
</dbReference>
<dbReference type="GO" id="GO:0046943">
    <property type="term" value="F:carboxylic acid transmembrane transporter activity"/>
    <property type="evidence" value="ECO:0000318"/>
    <property type="project" value="GO_Central"/>
</dbReference>
<dbReference type="GO" id="GO:0015538">
    <property type="term" value="F:sialic acid:proton symporter activity"/>
    <property type="evidence" value="ECO:0000314"/>
    <property type="project" value="EcoCyc"/>
</dbReference>
<dbReference type="GO" id="GO:0046942">
    <property type="term" value="P:carboxylic acid transport"/>
    <property type="evidence" value="ECO:0000318"/>
    <property type="project" value="GO_Central"/>
</dbReference>
<dbReference type="GO" id="GO:0015739">
    <property type="term" value="P:sialic acid transport"/>
    <property type="evidence" value="ECO:0000314"/>
    <property type="project" value="EcoCyc"/>
</dbReference>
<dbReference type="CDD" id="cd17316">
    <property type="entry name" value="MFS_SV2_like"/>
    <property type="match status" value="1"/>
</dbReference>
<dbReference type="FunFam" id="1.20.1250.20:FF:000027">
    <property type="entry name" value="Sialic acid transporter NanT"/>
    <property type="match status" value="1"/>
</dbReference>
<dbReference type="FunFam" id="1.20.1250.20:FF:000038">
    <property type="entry name" value="Sialic acid transporter NanT"/>
    <property type="match status" value="1"/>
</dbReference>
<dbReference type="Gene3D" id="1.20.1250.20">
    <property type="entry name" value="MFS general substrate transporter like domains"/>
    <property type="match status" value="2"/>
</dbReference>
<dbReference type="HAMAP" id="MF_01238">
    <property type="entry name" value="MFS_NanT"/>
    <property type="match status" value="1"/>
</dbReference>
<dbReference type="InterPro" id="IPR011701">
    <property type="entry name" value="MFS"/>
</dbReference>
<dbReference type="InterPro" id="IPR020846">
    <property type="entry name" value="MFS_dom"/>
</dbReference>
<dbReference type="InterPro" id="IPR036259">
    <property type="entry name" value="MFS_trans_sf"/>
</dbReference>
<dbReference type="InterPro" id="IPR004742">
    <property type="entry name" value="SA_transporter"/>
</dbReference>
<dbReference type="NCBIfam" id="TIGR00891">
    <property type="entry name" value="2A0112"/>
    <property type="match status" value="1"/>
</dbReference>
<dbReference type="NCBIfam" id="NF003024">
    <property type="entry name" value="PRK03893.1"/>
    <property type="match status" value="1"/>
</dbReference>
<dbReference type="PANTHER" id="PTHR23508">
    <property type="entry name" value="CARBOXYLIC ACID TRANSPORTER PROTEIN HOMOLOG"/>
    <property type="match status" value="1"/>
</dbReference>
<dbReference type="PANTHER" id="PTHR23508:SF3">
    <property type="entry name" value="SIALIC ACID TRANSPORTER NANT"/>
    <property type="match status" value="1"/>
</dbReference>
<dbReference type="Pfam" id="PF07690">
    <property type="entry name" value="MFS_1"/>
    <property type="match status" value="1"/>
</dbReference>
<dbReference type="SUPFAM" id="SSF103473">
    <property type="entry name" value="MFS general substrate transporter"/>
    <property type="match status" value="1"/>
</dbReference>
<dbReference type="PROSITE" id="PS50850">
    <property type="entry name" value="MFS"/>
    <property type="match status" value="1"/>
</dbReference>
<reference key="1">
    <citation type="journal article" date="1995" name="J. Bacteriol.">
        <title>Derived structure of the putative sialic acid transporter from Escherichia coli predicts a novel sugar permease domain.</title>
        <authorList>
            <person name="Martinez J."/>
            <person name="Steenbergen S."/>
            <person name="Vimr E."/>
        </authorList>
    </citation>
    <scope>NUCLEOTIDE SEQUENCE [GENOMIC DNA]</scope>
</reference>
<reference key="2">
    <citation type="journal article" date="1997" name="Science">
        <title>The complete genome sequence of Escherichia coli K-12.</title>
        <authorList>
            <person name="Blattner F.R."/>
            <person name="Plunkett G. III"/>
            <person name="Bloch C.A."/>
            <person name="Perna N.T."/>
            <person name="Burland V."/>
            <person name="Riley M."/>
            <person name="Collado-Vides J."/>
            <person name="Glasner J.D."/>
            <person name="Rode C.K."/>
            <person name="Mayhew G.F."/>
            <person name="Gregor J."/>
            <person name="Davis N.W."/>
            <person name="Kirkpatrick H.A."/>
            <person name="Goeden M.A."/>
            <person name="Rose D.J."/>
            <person name="Mau B."/>
            <person name="Shao Y."/>
        </authorList>
    </citation>
    <scope>NUCLEOTIDE SEQUENCE [LARGE SCALE GENOMIC DNA]</scope>
    <source>
        <strain>K12 / MG1655 / ATCC 47076</strain>
    </source>
</reference>
<reference key="3">
    <citation type="journal article" date="2006" name="Mol. Syst. Biol.">
        <title>Highly accurate genome sequences of Escherichia coli K-12 strains MG1655 and W3110.</title>
        <authorList>
            <person name="Hayashi K."/>
            <person name="Morooka N."/>
            <person name="Yamamoto Y."/>
            <person name="Fujita K."/>
            <person name="Isono K."/>
            <person name="Choi S."/>
            <person name="Ohtsubo E."/>
            <person name="Baba T."/>
            <person name="Wanner B.L."/>
            <person name="Mori H."/>
            <person name="Horiuchi T."/>
        </authorList>
    </citation>
    <scope>NUCLEOTIDE SEQUENCE [LARGE SCALE GENOMIC DNA]</scope>
    <source>
        <strain>K12 / W3110 / ATCC 27325 / DSM 5911</strain>
    </source>
</reference>
<reference key="4">
    <citation type="journal article" date="1986" name="Agric. Biol. Chem.">
        <title>Nucleotide sequence of the N-acetylneuraminate lyase gene of Escherichia coli.</title>
        <authorList>
            <person name="Kawakami B."/>
            <person name="Kudo T."/>
            <person name="Narahashi Y."/>
            <person name="Horikoshi K."/>
        </authorList>
    </citation>
    <scope>NUCLEOTIDE SEQUENCE [GENOMIC DNA] OF 1-50</scope>
    <source>
        <strain>JE1011</strain>
    </source>
</reference>
<reference key="5">
    <citation type="journal article" date="2005" name="Science">
        <title>Global topology analysis of the Escherichia coli inner membrane proteome.</title>
        <authorList>
            <person name="Daley D.O."/>
            <person name="Rapp M."/>
            <person name="Granseth E."/>
            <person name="Melen K."/>
            <person name="Drew D."/>
            <person name="von Heijne G."/>
        </authorList>
    </citation>
    <scope>TOPOLOGY [LARGE SCALE ANALYSIS]</scope>
    <scope>SUBCELLULAR LOCATION</scope>
    <source>
        <strain>K12 / MG1655 / ATCC 47076</strain>
    </source>
</reference>
<reference key="6">
    <citation type="journal article" date="2012" name="J. Biol. Chem.">
        <title>The membrane proteins SiaQ and SiaM form an essential stoichiometric complex in the sialic acid tripartite ATP-independent periplasmic (TRAP) transporter SiaPQM (VC1777-1779) from Vibrio cholerae.</title>
        <authorList>
            <person name="Mulligan C."/>
            <person name="Leech A.P."/>
            <person name="Kelly D.J."/>
            <person name="Thomas G.H."/>
        </authorList>
    </citation>
    <scope>FUNCTION</scope>
    <scope>CATALYTIC ACTIVITY</scope>
</reference>
<reference key="7">
    <citation type="journal article" date="2013" name="FEMS Microbiol. Lett.">
        <title>Transport and catabolism of the sialic acids N-glycolylneuraminic acid and 3-keto-3-deoxy-D-glycero-D-galactonononic acid by Escherichia coli K-12.</title>
        <authorList>
            <person name="Hopkins A.P."/>
            <person name="Hawkhead J.A."/>
            <person name="Thomas G.H."/>
        </authorList>
    </citation>
    <scope>FUNCTION</scope>
    <scope>CATALYTIC ACTIVITY</scope>
    <scope>DISRUPTION PHENOTYPE</scope>
</reference>
<reference key="8">
    <citation type="journal article" date="2013" name="J. Bacteriol.">
        <title>Control of the Escherichia coli sialoregulon by transcriptional repressor NanR.</title>
        <authorList>
            <person name="Kalivoda K.A."/>
            <person name="Steenbergen S.M."/>
            <person name="Vimr E.R."/>
        </authorList>
    </citation>
    <scope>INDUCTION</scope>
</reference>